<dbReference type="EC" id="5.3.1.24"/>
<dbReference type="EMBL" id="AE000666">
    <property type="protein sequence ID" value="AAB86130.1"/>
    <property type="molecule type" value="Genomic_DNA"/>
</dbReference>
<dbReference type="PIR" id="F69088">
    <property type="entry name" value="F69088"/>
</dbReference>
<dbReference type="SMR" id="O27695"/>
<dbReference type="STRING" id="187420.MTH_1658"/>
<dbReference type="PaxDb" id="187420-MTH_1658"/>
<dbReference type="EnsemblBacteria" id="AAB86130">
    <property type="protein sequence ID" value="AAB86130"/>
    <property type="gene ID" value="MTH_1658"/>
</dbReference>
<dbReference type="KEGG" id="mth:MTH_1658"/>
<dbReference type="PATRIC" id="fig|187420.15.peg.1620"/>
<dbReference type="HOGENOM" id="CLU_076364_2_0_2"/>
<dbReference type="InParanoid" id="O27695"/>
<dbReference type="UniPathway" id="UPA00035">
    <property type="reaction ID" value="UER00042"/>
</dbReference>
<dbReference type="Proteomes" id="UP000005223">
    <property type="component" value="Chromosome"/>
</dbReference>
<dbReference type="GO" id="GO:0004640">
    <property type="term" value="F:phosphoribosylanthranilate isomerase activity"/>
    <property type="evidence" value="ECO:0007669"/>
    <property type="project" value="UniProtKB-UniRule"/>
</dbReference>
<dbReference type="GO" id="GO:0000162">
    <property type="term" value="P:L-tryptophan biosynthetic process"/>
    <property type="evidence" value="ECO:0007669"/>
    <property type="project" value="UniProtKB-UniRule"/>
</dbReference>
<dbReference type="CDD" id="cd00405">
    <property type="entry name" value="PRAI"/>
    <property type="match status" value="1"/>
</dbReference>
<dbReference type="Gene3D" id="3.20.20.70">
    <property type="entry name" value="Aldolase class I"/>
    <property type="match status" value="1"/>
</dbReference>
<dbReference type="HAMAP" id="MF_00135">
    <property type="entry name" value="PRAI"/>
    <property type="match status" value="1"/>
</dbReference>
<dbReference type="InterPro" id="IPR013785">
    <property type="entry name" value="Aldolase_TIM"/>
</dbReference>
<dbReference type="InterPro" id="IPR001240">
    <property type="entry name" value="PRAI_dom"/>
</dbReference>
<dbReference type="InterPro" id="IPR011060">
    <property type="entry name" value="RibuloseP-bd_barrel"/>
</dbReference>
<dbReference type="InterPro" id="IPR044643">
    <property type="entry name" value="TrpF_fam"/>
</dbReference>
<dbReference type="PANTHER" id="PTHR42894">
    <property type="entry name" value="N-(5'-PHOSPHORIBOSYL)ANTHRANILATE ISOMERASE"/>
    <property type="match status" value="1"/>
</dbReference>
<dbReference type="PANTHER" id="PTHR42894:SF1">
    <property type="entry name" value="N-(5'-PHOSPHORIBOSYL)ANTHRANILATE ISOMERASE"/>
    <property type="match status" value="1"/>
</dbReference>
<dbReference type="Pfam" id="PF00697">
    <property type="entry name" value="PRAI"/>
    <property type="match status" value="1"/>
</dbReference>
<dbReference type="SUPFAM" id="SSF51366">
    <property type="entry name" value="Ribulose-phoshate binding barrel"/>
    <property type="match status" value="1"/>
</dbReference>
<reference key="1">
    <citation type="journal article" date="1997" name="J. Bacteriol.">
        <title>Complete genome sequence of Methanobacterium thermoautotrophicum deltaH: functional analysis and comparative genomics.</title>
        <authorList>
            <person name="Smith D.R."/>
            <person name="Doucette-Stamm L.A."/>
            <person name="Deloughery C."/>
            <person name="Lee H.-M."/>
            <person name="Dubois J."/>
            <person name="Aldredge T."/>
            <person name="Bashirzadeh R."/>
            <person name="Blakely D."/>
            <person name="Cook R."/>
            <person name="Gilbert K."/>
            <person name="Harrison D."/>
            <person name="Hoang L."/>
            <person name="Keagle P."/>
            <person name="Lumm W."/>
            <person name="Pothier B."/>
            <person name="Qiu D."/>
            <person name="Spadafora R."/>
            <person name="Vicare R."/>
            <person name="Wang Y."/>
            <person name="Wierzbowski J."/>
            <person name="Gibson R."/>
            <person name="Jiwani N."/>
            <person name="Caruso A."/>
            <person name="Bush D."/>
            <person name="Safer H."/>
            <person name="Patwell D."/>
            <person name="Prabhakar S."/>
            <person name="McDougall S."/>
            <person name="Shimer G."/>
            <person name="Goyal A."/>
            <person name="Pietrovski S."/>
            <person name="Church G.M."/>
            <person name="Daniels C.J."/>
            <person name="Mao J.-I."/>
            <person name="Rice P."/>
            <person name="Noelling J."/>
            <person name="Reeve J.N."/>
        </authorList>
    </citation>
    <scope>NUCLEOTIDE SEQUENCE [LARGE SCALE GENOMIC DNA]</scope>
    <source>
        <strain>ATCC 29096 / DSM 1053 / JCM 10044 / NBRC 100330 / Delta H</strain>
    </source>
</reference>
<protein>
    <recommendedName>
        <fullName>N-(5'-phosphoribosyl)anthranilate isomerase</fullName>
        <shortName>PRAI</shortName>
        <ecNumber>5.3.1.24</ecNumber>
    </recommendedName>
</protein>
<organism>
    <name type="scientific">Methanothermobacter thermautotrophicus (strain ATCC 29096 / DSM 1053 / JCM 10044 / NBRC 100330 / Delta H)</name>
    <name type="common">Methanobacterium thermoautotrophicum</name>
    <dbReference type="NCBI Taxonomy" id="187420"/>
    <lineage>
        <taxon>Archaea</taxon>
        <taxon>Methanobacteriati</taxon>
        <taxon>Methanobacteriota</taxon>
        <taxon>Methanomada group</taxon>
        <taxon>Methanobacteria</taxon>
        <taxon>Methanobacteriales</taxon>
        <taxon>Methanobacteriaceae</taxon>
        <taxon>Methanothermobacter</taxon>
    </lineage>
</organism>
<evidence type="ECO:0000305" key="1"/>
<proteinExistence type="inferred from homology"/>
<gene>
    <name type="primary">trpF</name>
    <name type="ordered locus">MTH_1658</name>
</gene>
<sequence>MNSSHESLADVLVKICGIKRPEDAILADKLGADLLGLIHVERSPRHLTGRELEDILSLIPPEKAVIVLEPSDPVEVAEVIERTGVERVQLHSISCEDARGIKRVLTENGFNPGITVAVPPEPGSLDVLDHIPCSCVMLDSSSGGRTGGTGRMIPPELALGMLRLIRSHESAPEVALAGGLGPSTVRLNPEYLLEFDCLDFNSGIEAAPGIKDHAMMFELMEYMGRTGGLQKPSRLQRGELS</sequence>
<feature type="chain" id="PRO_0000154407" description="N-(5'-phosphoribosyl)anthranilate isomerase">
    <location>
        <begin position="1"/>
        <end position="241"/>
    </location>
</feature>
<keyword id="KW-0028">Amino-acid biosynthesis</keyword>
<keyword id="KW-0057">Aromatic amino acid biosynthesis</keyword>
<keyword id="KW-0413">Isomerase</keyword>
<keyword id="KW-1185">Reference proteome</keyword>
<keyword id="KW-0822">Tryptophan biosynthesis</keyword>
<comment type="catalytic activity">
    <reaction>
        <text>N-(5-phospho-beta-D-ribosyl)anthranilate = 1-(2-carboxyphenylamino)-1-deoxy-D-ribulose 5-phosphate</text>
        <dbReference type="Rhea" id="RHEA:21540"/>
        <dbReference type="ChEBI" id="CHEBI:18277"/>
        <dbReference type="ChEBI" id="CHEBI:58613"/>
        <dbReference type="EC" id="5.3.1.24"/>
    </reaction>
</comment>
<comment type="pathway">
    <text>Amino-acid biosynthesis; L-tryptophan biosynthesis; L-tryptophan from chorismate: step 3/5.</text>
</comment>
<comment type="similarity">
    <text evidence="1">Belongs to the TrpF family.</text>
</comment>
<name>TRPF_METTH</name>
<accession>O27695</accession>